<evidence type="ECO:0000250" key="1">
    <source>
        <dbReference type="UniProtKB" id="Q17R31"/>
    </source>
</evidence>
<evidence type="ECO:0000250" key="2">
    <source>
        <dbReference type="UniProtKB" id="Q6P1N9"/>
    </source>
</evidence>
<evidence type="ECO:0000305" key="3"/>
<accession>Q503T5</accession>
<reference key="1">
    <citation type="submission" date="2005-05" db="EMBL/GenBank/DDBJ databases">
        <authorList>
            <consortium name="NIH - Zebrafish Gene Collection (ZGC) project"/>
        </authorList>
    </citation>
    <scope>NUCLEOTIDE SEQUENCE [LARGE SCALE MRNA]</scope>
    <source>
        <tissue>Brain</tissue>
    </source>
</reference>
<sequence length="266" mass="29517">MARGFIDCHCHISASEFTTDTDDVLLRAKKAGVKALVAVTEGASEFEKVIQLSKTYPGFVFPCFGIHPLQGSGQDLHSVRVQDLDPFLYLFQTYKDDIVAIGEIGLDFTPWYSSITQERDEQMKVFIKQLEISKELDLPVNVHSRSSAKVTIATMKELGIRQALLHNFAGKPSVAMEGVQAGFCFSFPPAVSKNEQRAKLIRQIPLEHVCLETDSPALGLDKHVRNEPSNVTISCEYIAKVKGISSDVVMEVTTQNALRLFSKLKI</sequence>
<keyword id="KW-0378">Hydrolase</keyword>
<keyword id="KW-0479">Metal-binding</keyword>
<keyword id="KW-0540">Nuclease</keyword>
<keyword id="KW-0539">Nucleus</keyword>
<keyword id="KW-1185">Reference proteome</keyword>
<keyword id="KW-0862">Zinc</keyword>
<name>TATD3_DANRE</name>
<organism>
    <name type="scientific">Danio rerio</name>
    <name type="common">Zebrafish</name>
    <name type="synonym">Brachydanio rerio</name>
    <dbReference type="NCBI Taxonomy" id="7955"/>
    <lineage>
        <taxon>Eukaryota</taxon>
        <taxon>Metazoa</taxon>
        <taxon>Chordata</taxon>
        <taxon>Craniata</taxon>
        <taxon>Vertebrata</taxon>
        <taxon>Euteleostomi</taxon>
        <taxon>Actinopterygii</taxon>
        <taxon>Neopterygii</taxon>
        <taxon>Teleostei</taxon>
        <taxon>Ostariophysi</taxon>
        <taxon>Cypriniformes</taxon>
        <taxon>Danionidae</taxon>
        <taxon>Danioninae</taxon>
        <taxon>Danio</taxon>
    </lineage>
</organism>
<gene>
    <name type="primary">tatdn3</name>
    <name type="ORF">zgc:110166</name>
</gene>
<dbReference type="EC" id="3.1.21.-"/>
<dbReference type="EMBL" id="BC095191">
    <property type="protein sequence ID" value="AAH95191.1"/>
    <property type="molecule type" value="mRNA"/>
</dbReference>
<dbReference type="RefSeq" id="NP_001018405.1">
    <property type="nucleotide sequence ID" value="NM_001020569.1"/>
</dbReference>
<dbReference type="SMR" id="Q503T5"/>
<dbReference type="FunCoup" id="Q503T5">
    <property type="interactions" value="6"/>
</dbReference>
<dbReference type="STRING" id="7955.ENSDARP00000127347"/>
<dbReference type="PaxDb" id="7955-ENSDARP00000127347"/>
<dbReference type="GeneID" id="553592"/>
<dbReference type="KEGG" id="dre:553592"/>
<dbReference type="AGR" id="ZFIN:ZDB-GENE-050522-192"/>
<dbReference type="CTD" id="128387"/>
<dbReference type="ZFIN" id="ZDB-GENE-050522-192">
    <property type="gene designation" value="tatdn3"/>
</dbReference>
<dbReference type="eggNOG" id="KOG3020">
    <property type="taxonomic scope" value="Eukaryota"/>
</dbReference>
<dbReference type="InParanoid" id="Q503T5"/>
<dbReference type="OrthoDB" id="413993at2759"/>
<dbReference type="PhylomeDB" id="Q503T5"/>
<dbReference type="PRO" id="PR:Q503T5"/>
<dbReference type="Proteomes" id="UP000000437">
    <property type="component" value="Chromosome 20"/>
</dbReference>
<dbReference type="GO" id="GO:0005634">
    <property type="term" value="C:nucleus"/>
    <property type="evidence" value="ECO:0007669"/>
    <property type="project" value="UniProtKB-SubCell"/>
</dbReference>
<dbReference type="GO" id="GO:0046872">
    <property type="term" value="F:metal ion binding"/>
    <property type="evidence" value="ECO:0007669"/>
    <property type="project" value="UniProtKB-KW"/>
</dbReference>
<dbReference type="GO" id="GO:0004518">
    <property type="term" value="F:nuclease activity"/>
    <property type="evidence" value="ECO:0007669"/>
    <property type="project" value="UniProtKB-KW"/>
</dbReference>
<dbReference type="CDD" id="cd01310">
    <property type="entry name" value="TatD_DNAse"/>
    <property type="match status" value="1"/>
</dbReference>
<dbReference type="Gene3D" id="3.20.20.140">
    <property type="entry name" value="Metal-dependent hydrolases"/>
    <property type="match status" value="1"/>
</dbReference>
<dbReference type="InterPro" id="IPR032466">
    <property type="entry name" value="Metal_Hydrolase"/>
</dbReference>
<dbReference type="InterPro" id="IPR001130">
    <property type="entry name" value="TatD-like"/>
</dbReference>
<dbReference type="PANTHER" id="PTHR46317:SF3">
    <property type="entry name" value="DEOXYRIBONUCLEASE TATDN3-RELATED"/>
    <property type="match status" value="1"/>
</dbReference>
<dbReference type="PANTHER" id="PTHR46317">
    <property type="entry name" value="HYDROLASE OF PHP SUPERFAMILY-RELATED PROTEIN"/>
    <property type="match status" value="1"/>
</dbReference>
<dbReference type="Pfam" id="PF01026">
    <property type="entry name" value="TatD_DNase"/>
    <property type="match status" value="1"/>
</dbReference>
<dbReference type="PIRSF" id="PIRSF005902">
    <property type="entry name" value="DNase_TatD"/>
    <property type="match status" value="1"/>
</dbReference>
<dbReference type="SUPFAM" id="SSF51556">
    <property type="entry name" value="Metallo-dependent hydrolases"/>
    <property type="match status" value="1"/>
</dbReference>
<comment type="function">
    <text evidence="1">Exhibits 3'-exonuclease activities and apurinic/apyrimidinic (AP) endonuclease (in vitro). Show preferential AP endonuclease activity on double-stranded DNA substrates and 3'- exonuclease activity on single-stranded DNA.</text>
</comment>
<comment type="cofactor">
    <cofactor evidence="1">
        <name>Mn(2+)</name>
        <dbReference type="ChEBI" id="CHEBI:29035"/>
    </cofactor>
    <cofactor evidence="1">
        <name>Ca(2+)</name>
        <dbReference type="ChEBI" id="CHEBI:29108"/>
    </cofactor>
    <cofactor evidence="1">
        <name>Mg(2+)</name>
        <dbReference type="ChEBI" id="CHEBI:18420"/>
    </cofactor>
    <cofactor evidence="1">
        <name>Zn(2+)</name>
        <dbReference type="ChEBI" id="CHEBI:29105"/>
    </cofactor>
    <text evidence="1 2">Binds 2 Zn(2+) per subunit (By similarity). Exhibits AP endonuclease and 3'-exonuclease activities in the presence of Mg(2+) and Mn(2+). In contrast, in the presence of Ca(2+), shows AP endonuclease activity exclusively (By similarity).</text>
</comment>
<comment type="activity regulation">
    <text evidence="1">The 3'-exonuclease activity is sensitive to the metal ion present in the active site, whereas the AP endodeoxyribonuclease activity is observed in a variety of divalent metal cofactors. 3'-exoxonuclease activity is suppressed in the presence of Ca(2+), Zn(2+) and Ni(2+).</text>
</comment>
<comment type="subcellular location">
    <subcellularLocation>
        <location evidence="3">Nucleus</location>
    </subcellularLocation>
</comment>
<comment type="similarity">
    <text evidence="3">Belongs to the metallo-dependent hydrolases superfamily. TatD-type hydrolase family.</text>
</comment>
<proteinExistence type="evidence at transcript level"/>
<feature type="chain" id="PRO_0000313597" description="Putative deoxyribonuclease tatdn3">
    <location>
        <begin position="1"/>
        <end position="266"/>
    </location>
</feature>
<feature type="binding site" evidence="1">
    <location>
        <position position="9"/>
    </location>
    <ligand>
        <name>Zn(2+)</name>
        <dbReference type="ChEBI" id="CHEBI:29105"/>
        <label>1</label>
    </ligand>
</feature>
<feature type="binding site" evidence="1">
    <location>
        <position position="11"/>
    </location>
    <ligand>
        <name>Zn(2+)</name>
        <dbReference type="ChEBI" id="CHEBI:29105"/>
        <label>1</label>
    </ligand>
</feature>
<feature type="binding site" evidence="1">
    <location>
        <position position="103"/>
    </location>
    <ligand>
        <name>Zn(2+)</name>
        <dbReference type="ChEBI" id="CHEBI:29105"/>
        <label>1</label>
    </ligand>
</feature>
<feature type="binding site" evidence="1">
    <location>
        <position position="103"/>
    </location>
    <ligand>
        <name>Zn(2+)</name>
        <dbReference type="ChEBI" id="CHEBI:29105"/>
        <label>2</label>
    </ligand>
</feature>
<feature type="binding site" evidence="1">
    <location>
        <position position="143"/>
    </location>
    <ligand>
        <name>Zn(2+)</name>
        <dbReference type="ChEBI" id="CHEBI:29105"/>
        <label>2</label>
    </ligand>
</feature>
<feature type="binding site" evidence="1">
    <location>
        <position position="166"/>
    </location>
    <ligand>
        <name>Zn(2+)</name>
        <dbReference type="ChEBI" id="CHEBI:29105"/>
        <label>2</label>
    </ligand>
</feature>
<feature type="binding site" evidence="1">
    <location>
        <position position="214"/>
    </location>
    <ligand>
        <name>Zn(2+)</name>
        <dbReference type="ChEBI" id="CHEBI:29105"/>
        <label>1</label>
    </ligand>
</feature>
<protein>
    <recommendedName>
        <fullName>Putative deoxyribonuclease tatdn3</fullName>
        <ecNumber>3.1.21.-</ecNumber>
    </recommendedName>
</protein>